<protein>
    <recommendedName>
        <fullName>Protein farnesyltransferase subunit beta</fullName>
        <shortName>FTase-beta</shortName>
        <ecNumber evidence="2">2.5.1.58</ecNumber>
    </recommendedName>
    <alternativeName>
        <fullName>CAAX farnesyltransferase subunit beta</fullName>
    </alternativeName>
    <alternativeName>
        <fullName>Ras proteins prenyltransferase subunit beta</fullName>
    </alternativeName>
</protein>
<feature type="chain" id="PRO_0000119767" description="Protein farnesyltransferase subunit beta">
    <location>
        <begin position="1"/>
        <end position="382"/>
    </location>
</feature>
<feature type="repeat" description="PFTB 1">
    <location>
        <begin position="78"/>
        <end position="119"/>
    </location>
</feature>
<feature type="repeat" description="PFTB 2">
    <location>
        <begin position="129"/>
        <end position="170"/>
    </location>
</feature>
<feature type="repeat" description="PFTB 3">
    <location>
        <begin position="178"/>
        <end position="219"/>
    </location>
</feature>
<feature type="repeat" description="PFTB 4">
    <location>
        <begin position="226"/>
        <end position="268"/>
    </location>
</feature>
<feature type="repeat" description="PFTB 5">
    <location>
        <begin position="286"/>
        <end position="328"/>
    </location>
</feature>
<feature type="binding site" evidence="1">
    <location>
        <begin position="204"/>
        <end position="207"/>
    </location>
    <ligand>
        <name>(2E,6E)-farnesyl diphosphate</name>
        <dbReference type="ChEBI" id="CHEBI:175763"/>
    </ligand>
</feature>
<feature type="binding site" evidence="1">
    <location>
        <begin position="247"/>
        <end position="250"/>
    </location>
    <ligand>
        <name>(2E,6E)-farnesyl diphosphate</name>
        <dbReference type="ChEBI" id="CHEBI:175763"/>
    </ligand>
</feature>
<feature type="binding site" evidence="1">
    <location>
        <position position="253"/>
    </location>
    <ligand>
        <name>Zn(2+)</name>
        <dbReference type="ChEBI" id="CHEBI:29105"/>
        <note>catalytic</note>
    </ligand>
</feature>
<feature type="binding site" evidence="1">
    <location>
        <position position="255"/>
    </location>
    <ligand>
        <name>Zn(2+)</name>
        <dbReference type="ChEBI" id="CHEBI:29105"/>
        <note>catalytic</note>
    </ligand>
</feature>
<feature type="binding site" evidence="1">
    <location>
        <begin position="256"/>
        <end position="259"/>
    </location>
    <ligand>
        <name>(2E,6E)-farnesyl diphosphate</name>
        <dbReference type="ChEBI" id="CHEBI:175763"/>
    </ligand>
</feature>
<feature type="binding site" evidence="1">
    <location>
        <position position="316"/>
    </location>
    <ligand>
        <name>Zn(2+)</name>
        <dbReference type="ChEBI" id="CHEBI:29105"/>
        <note>catalytic</note>
    </ligand>
</feature>
<feature type="site" description="Important for selectivity against geranylgeranyl diphosphate" evidence="1">
    <location>
        <position position="58"/>
    </location>
</feature>
<proteinExistence type="evidence at protein level"/>
<sequence length="382" mass="42189">MDELSETQVMQNETATAVLPLLNGESQSFNLQKHLKYLTKMLDPLPSPFTVLDASRAWMVYWELSSLAILGKLDSSVCERAISSVRQLKGPSGGFCGGNGQDEHLLSTYASILSICLCDSTDAYSLIERDRLYDWLFSLKNPDGSFRVNNEGESDARSVYAAVCVSSLVGISMDDPLFEGTLQWLCKCQTYEGGLSGVPYAEAHGGYTFCALAAIALLGGLDNLNEIKLSTWLVQRQDPALYGFSGRSNKLVDGCYSWWVGASHVIVASGYGSASHKSLPNLFYNPEKLLGYILQCCQSTSGGLRDKPPKRPDQYHTCYCLLGLSSIAYDYRYHTSDGWSYKPSILHSSLSSLLPAHPIYCVPFGFEERIKSYFLSQESSKF</sequence>
<organism>
    <name type="scientific">Schizosaccharomyces pombe (strain 972 / ATCC 24843)</name>
    <name type="common">Fission yeast</name>
    <dbReference type="NCBI Taxonomy" id="284812"/>
    <lineage>
        <taxon>Eukaryota</taxon>
        <taxon>Fungi</taxon>
        <taxon>Dikarya</taxon>
        <taxon>Ascomycota</taxon>
        <taxon>Taphrinomycotina</taxon>
        <taxon>Schizosaccharomycetes</taxon>
        <taxon>Schizosaccharomycetales</taxon>
        <taxon>Schizosaccharomycetaceae</taxon>
        <taxon>Schizosaccharomyces</taxon>
    </lineage>
</organism>
<name>FNTB_SCHPO</name>
<comment type="function">
    <text evidence="2">Catalyzes the transfer of a farnesyl moiety from farnesyl diphosphate to a cysteine at the fourth position from the C-terminus of several proteins. The beta(cpp1) subunit is responsible for peptide-binding.</text>
</comment>
<comment type="catalytic activity">
    <reaction evidence="2">
        <text>L-cysteinyl-[protein] + (2E,6E)-farnesyl diphosphate = S-(2E,6E)-farnesyl-L-cysteinyl-[protein] + diphosphate</text>
        <dbReference type="Rhea" id="RHEA:13345"/>
        <dbReference type="Rhea" id="RHEA-COMP:10131"/>
        <dbReference type="Rhea" id="RHEA-COMP:11535"/>
        <dbReference type="ChEBI" id="CHEBI:29950"/>
        <dbReference type="ChEBI" id="CHEBI:33019"/>
        <dbReference type="ChEBI" id="CHEBI:86019"/>
        <dbReference type="ChEBI" id="CHEBI:175763"/>
        <dbReference type="EC" id="2.5.1.58"/>
    </reaction>
    <physiologicalReaction direction="left-to-right" evidence="2">
        <dbReference type="Rhea" id="RHEA:13346"/>
    </physiologicalReaction>
</comment>
<comment type="cofactor">
    <cofactor evidence="1">
        <name>Zn(2+)</name>
        <dbReference type="ChEBI" id="CHEBI:29105"/>
    </cofactor>
    <text evidence="1">Binds 1 zinc ion per subunit.</text>
</comment>
<comment type="subunit">
    <text evidence="2">Heterodimer of an alpha(cwp1) and a beta(cpp1) subunit.</text>
</comment>
<comment type="similarity">
    <text evidence="3">Belongs to the protein prenyltransferase subunit beta family.</text>
</comment>
<gene>
    <name type="primary">cpp1</name>
    <name type="ORF">SPAC17G6.04c</name>
</gene>
<accession>O13782</accession>
<dbReference type="EC" id="2.5.1.58" evidence="2"/>
<dbReference type="EMBL" id="CU329670">
    <property type="protein sequence ID" value="CAB16215.1"/>
    <property type="molecule type" value="Genomic_DNA"/>
</dbReference>
<dbReference type="PIR" id="T37836">
    <property type="entry name" value="T37836"/>
</dbReference>
<dbReference type="RefSeq" id="NP_594251.1">
    <property type="nucleotide sequence ID" value="NM_001019674.2"/>
</dbReference>
<dbReference type="SMR" id="O13782"/>
<dbReference type="BioGRID" id="278844">
    <property type="interactions" value="13"/>
</dbReference>
<dbReference type="ComplexPortal" id="CPX-25759">
    <property type="entry name" value="Protein farnesyltransferase complex"/>
</dbReference>
<dbReference type="FunCoup" id="O13782">
    <property type="interactions" value="220"/>
</dbReference>
<dbReference type="STRING" id="284812.O13782"/>
<dbReference type="iPTMnet" id="O13782"/>
<dbReference type="PaxDb" id="4896-SPAC17G6.04c.1"/>
<dbReference type="EnsemblFungi" id="SPAC17G6.04c.1">
    <property type="protein sequence ID" value="SPAC17G6.04c.1:pep"/>
    <property type="gene ID" value="SPAC17G6.04c"/>
</dbReference>
<dbReference type="GeneID" id="2542380"/>
<dbReference type="KEGG" id="spo:2542380"/>
<dbReference type="PomBase" id="SPAC17G6.04c">
    <property type="gene designation" value="cpp1"/>
</dbReference>
<dbReference type="VEuPathDB" id="FungiDB:SPAC17G6.04c"/>
<dbReference type="eggNOG" id="KOG0365">
    <property type="taxonomic scope" value="Eukaryota"/>
</dbReference>
<dbReference type="HOGENOM" id="CLU_028946_0_2_1"/>
<dbReference type="InParanoid" id="O13782"/>
<dbReference type="OMA" id="WCIYWIL"/>
<dbReference type="PhylomeDB" id="O13782"/>
<dbReference type="Reactome" id="R-SPO-9648002">
    <property type="pathway name" value="RAS processing"/>
</dbReference>
<dbReference type="PRO" id="PR:O13782"/>
<dbReference type="Proteomes" id="UP000002485">
    <property type="component" value="Chromosome I"/>
</dbReference>
<dbReference type="GO" id="GO:0005829">
    <property type="term" value="C:cytosol"/>
    <property type="evidence" value="ECO:0007005"/>
    <property type="project" value="PomBase"/>
</dbReference>
<dbReference type="GO" id="GO:0005634">
    <property type="term" value="C:nucleus"/>
    <property type="evidence" value="ECO:0007005"/>
    <property type="project" value="PomBase"/>
</dbReference>
<dbReference type="GO" id="GO:0005965">
    <property type="term" value="C:protein farnesyltransferase complex"/>
    <property type="evidence" value="ECO:0000353"/>
    <property type="project" value="PomBase"/>
</dbReference>
<dbReference type="GO" id="GO:0004660">
    <property type="term" value="F:protein farnesyltransferase activity"/>
    <property type="evidence" value="ECO:0000314"/>
    <property type="project" value="PomBase"/>
</dbReference>
<dbReference type="GO" id="GO:0008270">
    <property type="term" value="F:zinc ion binding"/>
    <property type="evidence" value="ECO:0000250"/>
    <property type="project" value="UniProtKB"/>
</dbReference>
<dbReference type="GO" id="GO:0072659">
    <property type="term" value="P:protein localization to plasma membrane"/>
    <property type="evidence" value="ECO:0000305"/>
    <property type="project" value="PomBase"/>
</dbReference>
<dbReference type="CDD" id="cd02893">
    <property type="entry name" value="FTase"/>
    <property type="match status" value="1"/>
</dbReference>
<dbReference type="Gene3D" id="1.50.10.20">
    <property type="match status" value="1"/>
</dbReference>
<dbReference type="InterPro" id="IPR026872">
    <property type="entry name" value="FTB"/>
</dbReference>
<dbReference type="InterPro" id="IPR045089">
    <property type="entry name" value="PGGT1B-like"/>
</dbReference>
<dbReference type="InterPro" id="IPR001330">
    <property type="entry name" value="Prenyltrans"/>
</dbReference>
<dbReference type="InterPro" id="IPR008930">
    <property type="entry name" value="Terpenoid_cyclase/PrenylTrfase"/>
</dbReference>
<dbReference type="PANTHER" id="PTHR11774">
    <property type="entry name" value="GERANYLGERANYL TRANSFERASE TYPE BETA SUBUNIT"/>
    <property type="match status" value="1"/>
</dbReference>
<dbReference type="PANTHER" id="PTHR11774:SF6">
    <property type="entry name" value="PROTEIN FARNESYLTRANSFERASE SUBUNIT BETA"/>
    <property type="match status" value="1"/>
</dbReference>
<dbReference type="Pfam" id="PF00432">
    <property type="entry name" value="Prenyltrans"/>
    <property type="match status" value="1"/>
</dbReference>
<dbReference type="SUPFAM" id="SSF48239">
    <property type="entry name" value="Terpenoid cyclases/Protein prenyltransferases"/>
    <property type="match status" value="1"/>
</dbReference>
<reference key="1">
    <citation type="journal article" date="2000" name="J. Biol. Chem.">
        <title>Protein farnesylation is critical for maintaining normal cell morphology and canavanine resistance in Schizosaccharomyces pombe.</title>
        <authorList>
            <person name="Yang W."/>
            <person name="Urano J."/>
            <person name="Tamanoi F."/>
        </authorList>
    </citation>
    <scope>NUCLEOTIDE SEQUENCE [GENOMIC DNA]</scope>
    <scope>FUNCTION</scope>
    <scope>CATALYTIC ACTIVITY</scope>
    <scope>SUBUNIT</scope>
</reference>
<reference key="2">
    <citation type="journal article" date="2002" name="Nature">
        <title>The genome sequence of Schizosaccharomyces pombe.</title>
        <authorList>
            <person name="Wood V."/>
            <person name="Gwilliam R."/>
            <person name="Rajandream M.A."/>
            <person name="Lyne M.H."/>
            <person name="Lyne R."/>
            <person name="Stewart A."/>
            <person name="Sgouros J.G."/>
            <person name="Peat N."/>
            <person name="Hayles J."/>
            <person name="Baker S.G."/>
            <person name="Basham D."/>
            <person name="Bowman S."/>
            <person name="Brooks K."/>
            <person name="Brown D."/>
            <person name="Brown S."/>
            <person name="Chillingworth T."/>
            <person name="Churcher C.M."/>
            <person name="Collins M."/>
            <person name="Connor R."/>
            <person name="Cronin A."/>
            <person name="Davis P."/>
            <person name="Feltwell T."/>
            <person name="Fraser A."/>
            <person name="Gentles S."/>
            <person name="Goble A."/>
            <person name="Hamlin N."/>
            <person name="Harris D.E."/>
            <person name="Hidalgo J."/>
            <person name="Hodgson G."/>
            <person name="Holroyd S."/>
            <person name="Hornsby T."/>
            <person name="Howarth S."/>
            <person name="Huckle E.J."/>
            <person name="Hunt S."/>
            <person name="Jagels K."/>
            <person name="James K.D."/>
            <person name="Jones L."/>
            <person name="Jones M."/>
            <person name="Leather S."/>
            <person name="McDonald S."/>
            <person name="McLean J."/>
            <person name="Mooney P."/>
            <person name="Moule S."/>
            <person name="Mungall K.L."/>
            <person name="Murphy L.D."/>
            <person name="Niblett D."/>
            <person name="Odell C."/>
            <person name="Oliver K."/>
            <person name="O'Neil S."/>
            <person name="Pearson D."/>
            <person name="Quail M.A."/>
            <person name="Rabbinowitsch E."/>
            <person name="Rutherford K.M."/>
            <person name="Rutter S."/>
            <person name="Saunders D."/>
            <person name="Seeger K."/>
            <person name="Sharp S."/>
            <person name="Skelton J."/>
            <person name="Simmonds M.N."/>
            <person name="Squares R."/>
            <person name="Squares S."/>
            <person name="Stevens K."/>
            <person name="Taylor K."/>
            <person name="Taylor R.G."/>
            <person name="Tivey A."/>
            <person name="Walsh S.V."/>
            <person name="Warren T."/>
            <person name="Whitehead S."/>
            <person name="Woodward J.R."/>
            <person name="Volckaert G."/>
            <person name="Aert R."/>
            <person name="Robben J."/>
            <person name="Grymonprez B."/>
            <person name="Weltjens I."/>
            <person name="Vanstreels E."/>
            <person name="Rieger M."/>
            <person name="Schaefer M."/>
            <person name="Mueller-Auer S."/>
            <person name="Gabel C."/>
            <person name="Fuchs M."/>
            <person name="Duesterhoeft A."/>
            <person name="Fritzc C."/>
            <person name="Holzer E."/>
            <person name="Moestl D."/>
            <person name="Hilbert H."/>
            <person name="Borzym K."/>
            <person name="Langer I."/>
            <person name="Beck A."/>
            <person name="Lehrach H."/>
            <person name="Reinhardt R."/>
            <person name="Pohl T.M."/>
            <person name="Eger P."/>
            <person name="Zimmermann W."/>
            <person name="Wedler H."/>
            <person name="Wambutt R."/>
            <person name="Purnelle B."/>
            <person name="Goffeau A."/>
            <person name="Cadieu E."/>
            <person name="Dreano S."/>
            <person name="Gloux S."/>
            <person name="Lelaure V."/>
            <person name="Mottier S."/>
            <person name="Galibert F."/>
            <person name="Aves S.J."/>
            <person name="Xiang Z."/>
            <person name="Hunt C."/>
            <person name="Moore K."/>
            <person name="Hurst S.M."/>
            <person name="Lucas M."/>
            <person name="Rochet M."/>
            <person name="Gaillardin C."/>
            <person name="Tallada V.A."/>
            <person name="Garzon A."/>
            <person name="Thode G."/>
            <person name="Daga R.R."/>
            <person name="Cruzado L."/>
            <person name="Jimenez J."/>
            <person name="Sanchez M."/>
            <person name="del Rey F."/>
            <person name="Benito J."/>
            <person name="Dominguez A."/>
            <person name="Revuelta J.L."/>
            <person name="Moreno S."/>
            <person name="Armstrong J."/>
            <person name="Forsburg S.L."/>
            <person name="Cerutti L."/>
            <person name="Lowe T."/>
            <person name="McCombie W.R."/>
            <person name="Paulsen I."/>
            <person name="Potashkin J."/>
            <person name="Shpakovski G.V."/>
            <person name="Ussery D."/>
            <person name="Barrell B.G."/>
            <person name="Nurse P."/>
        </authorList>
    </citation>
    <scope>NUCLEOTIDE SEQUENCE [LARGE SCALE GENOMIC DNA]</scope>
    <source>
        <strain>972 / ATCC 24843</strain>
    </source>
</reference>
<keyword id="KW-0479">Metal-binding</keyword>
<keyword id="KW-0637">Prenyltransferase</keyword>
<keyword id="KW-1185">Reference proteome</keyword>
<keyword id="KW-0677">Repeat</keyword>
<keyword id="KW-0808">Transferase</keyword>
<keyword id="KW-0862">Zinc</keyword>
<evidence type="ECO:0000250" key="1">
    <source>
        <dbReference type="UniProtKB" id="P49356"/>
    </source>
</evidence>
<evidence type="ECO:0000269" key="2">
    <source>
    </source>
</evidence>
<evidence type="ECO:0000305" key="3"/>